<accession>P51081</accession>
<gene>
    <name type="primary">CHS-1A</name>
</gene>
<name>CHSA_PEA</name>
<keyword id="KW-0012">Acyltransferase</keyword>
<keyword id="KW-0284">Flavonoid biosynthesis</keyword>
<keyword id="KW-0808">Transferase</keyword>
<protein>
    <recommendedName>
        <fullName>Chalcone synthase 1A</fullName>
        <ecNumber>2.3.1.74</ecNumber>
    </recommendedName>
    <alternativeName>
        <fullName>Naringenin-chalcone synthase 1A</fullName>
    </alternativeName>
</protein>
<proteinExistence type="inferred from homology"/>
<evidence type="ECO:0000255" key="1">
    <source>
        <dbReference type="PROSITE-ProRule" id="PRU10023"/>
    </source>
</evidence>
<evidence type="ECO:0000305" key="2"/>
<comment type="function">
    <text>The primary product of this enzyme is 4,2',4',6'-tetrahydroxychalcone (also termed naringenin-chalcone or chalcone) which can under specific conditions spontaneously isomerize into naringenin.</text>
</comment>
<comment type="catalytic activity">
    <reaction evidence="1">
        <text>(E)-4-coumaroyl-CoA + 3 malonyl-CoA + 3 H(+) = 2',4,4',6'-tetrahydroxychalcone + 3 CO2 + 4 CoA</text>
        <dbReference type="Rhea" id="RHEA:11128"/>
        <dbReference type="ChEBI" id="CHEBI:15378"/>
        <dbReference type="ChEBI" id="CHEBI:15413"/>
        <dbReference type="ChEBI" id="CHEBI:16526"/>
        <dbReference type="ChEBI" id="CHEBI:57287"/>
        <dbReference type="ChEBI" id="CHEBI:57384"/>
        <dbReference type="ChEBI" id="CHEBI:85008"/>
        <dbReference type="EC" id="2.3.1.74"/>
    </reaction>
</comment>
<comment type="pathway">
    <text>Secondary metabolite biosynthesis; flavonoid biosynthesis.</text>
</comment>
<comment type="similarity">
    <text evidence="2">Belongs to the thiolase-like superfamily. Chalcone/stilbene synthases family.</text>
</comment>
<dbReference type="EC" id="2.3.1.74"/>
<dbReference type="EMBL" id="X80007">
    <property type="protein sequence ID" value="CAA56316.1"/>
    <property type="molecule type" value="Genomic_DNA"/>
</dbReference>
<dbReference type="PIR" id="S49202">
    <property type="entry name" value="S49202"/>
</dbReference>
<dbReference type="SMR" id="P51081"/>
<dbReference type="UniPathway" id="UPA00154"/>
<dbReference type="GO" id="GO:0016210">
    <property type="term" value="F:naringenin-chalcone synthase activity"/>
    <property type="evidence" value="ECO:0007669"/>
    <property type="project" value="UniProtKB-EC"/>
</dbReference>
<dbReference type="GO" id="GO:0009813">
    <property type="term" value="P:flavonoid biosynthetic process"/>
    <property type="evidence" value="ECO:0007669"/>
    <property type="project" value="UniProtKB-UniPathway"/>
</dbReference>
<dbReference type="GO" id="GO:0030639">
    <property type="term" value="P:polyketide biosynthetic process"/>
    <property type="evidence" value="ECO:0007669"/>
    <property type="project" value="TreeGrafter"/>
</dbReference>
<dbReference type="CDD" id="cd00831">
    <property type="entry name" value="CHS_like"/>
    <property type="match status" value="1"/>
</dbReference>
<dbReference type="FunFam" id="3.40.47.10:FF:000014">
    <property type="entry name" value="Chalcone synthase 1"/>
    <property type="match status" value="1"/>
</dbReference>
<dbReference type="FunFam" id="3.40.47.10:FF:000025">
    <property type="entry name" value="Chalcone synthase 2"/>
    <property type="match status" value="1"/>
</dbReference>
<dbReference type="Gene3D" id="3.40.47.10">
    <property type="match status" value="2"/>
</dbReference>
<dbReference type="InterPro" id="IPR012328">
    <property type="entry name" value="Chalcone/stilbene_synt_C"/>
</dbReference>
<dbReference type="InterPro" id="IPR001099">
    <property type="entry name" value="Chalcone/stilbene_synt_N"/>
</dbReference>
<dbReference type="InterPro" id="IPR018088">
    <property type="entry name" value="Chalcone/stilbene_synthase_AS"/>
</dbReference>
<dbReference type="InterPro" id="IPR011141">
    <property type="entry name" value="Polyketide_synthase_type-III"/>
</dbReference>
<dbReference type="InterPro" id="IPR016039">
    <property type="entry name" value="Thiolase-like"/>
</dbReference>
<dbReference type="PANTHER" id="PTHR11877:SF100">
    <property type="entry name" value="CHALCONE SYNTHASE 3"/>
    <property type="match status" value="1"/>
</dbReference>
<dbReference type="PANTHER" id="PTHR11877">
    <property type="entry name" value="HYDROXYMETHYLGLUTARYL-COA SYNTHASE"/>
    <property type="match status" value="1"/>
</dbReference>
<dbReference type="Pfam" id="PF02797">
    <property type="entry name" value="Chal_sti_synt_C"/>
    <property type="match status" value="1"/>
</dbReference>
<dbReference type="Pfam" id="PF00195">
    <property type="entry name" value="Chal_sti_synt_N"/>
    <property type="match status" value="1"/>
</dbReference>
<dbReference type="PIRSF" id="PIRSF000451">
    <property type="entry name" value="PKS_III"/>
    <property type="match status" value="1"/>
</dbReference>
<dbReference type="SUPFAM" id="SSF53901">
    <property type="entry name" value="Thiolase-like"/>
    <property type="match status" value="2"/>
</dbReference>
<dbReference type="PROSITE" id="PS00441">
    <property type="entry name" value="CHALCONE_SYNTH"/>
    <property type="match status" value="1"/>
</dbReference>
<sequence>MVTVNEIRQAQRAEGPATVFAIGTATPQNCVEQSTYPDFYFRITNSQHKTELKEKFQRMCDKSMIKKRYMHLTEEILKENPSLCEYMAPSLDARQDMVVVEVPKLGKEAATKAIKEWGQPKSKITHLIFCTTSGVDMPGADYQLTKLLGLRPYVKRYMMYQQGCFAGGTVLRLAKDLAENNKGARVLVVCSEITAVTFRGPSDTHLDSLVGQALFGDGAAAVIVGSDPLPDVEKPLFELVWTAQTIVPDSEGAIDGHLREAGLTFHLLKDVPSLVSKNIEKALVEAFQPLNISDYNSIFWIAHPGGPAILDQVEAKLGLKQRKMQATRHVLSEYGNMSSACVLFILDEMRRKSKEDGLATTGEGLEWGVLFGFGPGLTVETVLLHSMAT</sequence>
<feature type="chain" id="PRO_0000216024" description="Chalcone synthase 1A">
    <location>
        <begin position="1"/>
        <end position="389"/>
    </location>
</feature>
<feature type="active site" evidence="1">
    <location>
        <position position="164"/>
    </location>
</feature>
<reference key="1">
    <citation type="submission" date="1994-07" db="EMBL/GenBank/DDBJ databases">
        <authorList>
            <person name="Hellens R.P."/>
        </authorList>
    </citation>
    <scope>NUCLEOTIDE SEQUENCE [GENOMIC DNA]</scope>
    <source>
        <strain>cv. JI 813</strain>
    </source>
</reference>
<organism>
    <name type="scientific">Pisum sativum</name>
    <name type="common">Garden pea</name>
    <name type="synonym">Lathyrus oleraceus</name>
    <dbReference type="NCBI Taxonomy" id="3888"/>
    <lineage>
        <taxon>Eukaryota</taxon>
        <taxon>Viridiplantae</taxon>
        <taxon>Streptophyta</taxon>
        <taxon>Embryophyta</taxon>
        <taxon>Tracheophyta</taxon>
        <taxon>Spermatophyta</taxon>
        <taxon>Magnoliopsida</taxon>
        <taxon>eudicotyledons</taxon>
        <taxon>Gunneridae</taxon>
        <taxon>Pentapetalae</taxon>
        <taxon>rosids</taxon>
        <taxon>fabids</taxon>
        <taxon>Fabales</taxon>
        <taxon>Fabaceae</taxon>
        <taxon>Papilionoideae</taxon>
        <taxon>50 kb inversion clade</taxon>
        <taxon>NPAAA clade</taxon>
        <taxon>Hologalegina</taxon>
        <taxon>IRL clade</taxon>
        <taxon>Fabeae</taxon>
        <taxon>Pisum</taxon>
    </lineage>
</organism>